<reference key="1">
    <citation type="journal article" date="1998" name="Biochim. Biophys. Acta">
        <title>Six isoforms of cardiotoxin in malayan spitting cobra (Naja naja sputatrix) venom: cloning and characterization of cDNAs.</title>
        <authorList>
            <person name="Jeyaseelan K."/>
            <person name="Armugam A."/>
            <person name="Lachumanan R."/>
            <person name="Tan C.H."/>
            <person name="Tan N.H."/>
        </authorList>
    </citation>
    <scope>NUCLEOTIDE SEQUENCE [MRNA]</scope>
    <source>
        <tissue>Venom gland</tissue>
    </source>
</reference>
<accession>Q9PST3</accession>
<organism>
    <name type="scientific">Naja sputatrix</name>
    <name type="common">Malayan spitting cobra</name>
    <name type="synonym">Naja naja sputatrix</name>
    <dbReference type="NCBI Taxonomy" id="33626"/>
    <lineage>
        <taxon>Eukaryota</taxon>
        <taxon>Metazoa</taxon>
        <taxon>Chordata</taxon>
        <taxon>Craniata</taxon>
        <taxon>Vertebrata</taxon>
        <taxon>Euteleostomi</taxon>
        <taxon>Lepidosauria</taxon>
        <taxon>Squamata</taxon>
        <taxon>Bifurcata</taxon>
        <taxon>Unidentata</taxon>
        <taxon>Episquamata</taxon>
        <taxon>Toxicofera</taxon>
        <taxon>Serpentes</taxon>
        <taxon>Colubroidea</taxon>
        <taxon>Elapidae</taxon>
        <taxon>Elapinae</taxon>
        <taxon>Naja</taxon>
    </lineage>
</organism>
<evidence type="ECO:0000250" key="1"/>
<evidence type="ECO:0000250" key="2">
    <source>
        <dbReference type="UniProtKB" id="P60301"/>
    </source>
</evidence>
<evidence type="ECO:0000250" key="3">
    <source>
        <dbReference type="UniProtKB" id="P60304"/>
    </source>
</evidence>
<evidence type="ECO:0000305" key="4"/>
<proteinExistence type="inferred from homology"/>
<name>3SA2B_NAJSP</name>
<feature type="signal peptide" evidence="1">
    <location>
        <begin position="1"/>
        <end position="21"/>
    </location>
</feature>
<feature type="chain" id="PRO_0000035395" description="Cytotoxin 2b">
    <location>
        <begin position="22"/>
        <end position="81"/>
    </location>
</feature>
<feature type="disulfide bond" evidence="2">
    <location>
        <begin position="24"/>
        <end position="42"/>
    </location>
</feature>
<feature type="disulfide bond" evidence="2">
    <location>
        <begin position="35"/>
        <end position="59"/>
    </location>
</feature>
<feature type="disulfide bond" evidence="2">
    <location>
        <begin position="63"/>
        <end position="74"/>
    </location>
</feature>
<feature type="disulfide bond" evidence="2">
    <location>
        <begin position="75"/>
        <end position="80"/>
    </location>
</feature>
<protein>
    <recommendedName>
        <fullName>Cytotoxin 2b</fullName>
    </recommendedName>
    <alternativeName>
        <fullName>Cardiotoxin-2b</fullName>
        <shortName>CTX-2b</shortName>
        <shortName>Ctx2b</shortName>
    </alternativeName>
</protein>
<keyword id="KW-0123">Cardiotoxin</keyword>
<keyword id="KW-0204">Cytolysis</keyword>
<keyword id="KW-1015">Disulfide bond</keyword>
<keyword id="KW-0472">Membrane</keyword>
<keyword id="KW-0964">Secreted</keyword>
<keyword id="KW-0732">Signal</keyword>
<keyword id="KW-1052">Target cell membrane</keyword>
<keyword id="KW-1053">Target membrane</keyword>
<keyword id="KW-0800">Toxin</keyword>
<dbReference type="EMBL" id="U86591">
    <property type="protein sequence ID" value="AAC27686.1"/>
    <property type="molecule type" value="mRNA"/>
</dbReference>
<dbReference type="SMR" id="Q9PST3"/>
<dbReference type="GO" id="GO:0005576">
    <property type="term" value="C:extracellular region"/>
    <property type="evidence" value="ECO:0007669"/>
    <property type="project" value="UniProtKB-SubCell"/>
</dbReference>
<dbReference type="GO" id="GO:0016020">
    <property type="term" value="C:membrane"/>
    <property type="evidence" value="ECO:0007669"/>
    <property type="project" value="UniProtKB-KW"/>
</dbReference>
<dbReference type="GO" id="GO:0044218">
    <property type="term" value="C:other organism cell membrane"/>
    <property type="evidence" value="ECO:0007669"/>
    <property type="project" value="UniProtKB-KW"/>
</dbReference>
<dbReference type="GO" id="GO:0090729">
    <property type="term" value="F:toxin activity"/>
    <property type="evidence" value="ECO:0007669"/>
    <property type="project" value="UniProtKB-KW"/>
</dbReference>
<dbReference type="GO" id="GO:0031640">
    <property type="term" value="P:killing of cells of another organism"/>
    <property type="evidence" value="ECO:0007669"/>
    <property type="project" value="UniProtKB-KW"/>
</dbReference>
<dbReference type="CDD" id="cd00206">
    <property type="entry name" value="TFP_snake_toxin"/>
    <property type="match status" value="1"/>
</dbReference>
<dbReference type="FunFam" id="2.10.60.10:FF:000024">
    <property type="entry name" value="Cytotoxin 1"/>
    <property type="match status" value="1"/>
</dbReference>
<dbReference type="Gene3D" id="2.10.60.10">
    <property type="entry name" value="CD59"/>
    <property type="match status" value="1"/>
</dbReference>
<dbReference type="InterPro" id="IPR003572">
    <property type="entry name" value="Cytotoxin_Cobra"/>
</dbReference>
<dbReference type="InterPro" id="IPR003571">
    <property type="entry name" value="Snake_3FTx"/>
</dbReference>
<dbReference type="InterPro" id="IPR045860">
    <property type="entry name" value="Snake_toxin-like_sf"/>
</dbReference>
<dbReference type="InterPro" id="IPR018354">
    <property type="entry name" value="Snake_toxin_con_site"/>
</dbReference>
<dbReference type="InterPro" id="IPR054131">
    <property type="entry name" value="Toxin_cobra-type"/>
</dbReference>
<dbReference type="Pfam" id="PF21947">
    <property type="entry name" value="Toxin_cobra-type"/>
    <property type="match status" value="1"/>
</dbReference>
<dbReference type="PRINTS" id="PR00282">
    <property type="entry name" value="CYTOTOXIN"/>
</dbReference>
<dbReference type="SUPFAM" id="SSF57302">
    <property type="entry name" value="Snake toxin-like"/>
    <property type="match status" value="1"/>
</dbReference>
<dbReference type="PROSITE" id="PS00272">
    <property type="entry name" value="SNAKE_TOXIN"/>
    <property type="match status" value="1"/>
</dbReference>
<comment type="function">
    <text evidence="2 3">Shows cytolytic activity on many different cells by forming pore in lipid membranes. In vivo, increases heart rate or kills the animal by cardiac arrest. In addition, it binds to heparin with high affinity, interacts with Kv channel-interacting protein 1 (KCNIP1) in a calcium-independent manner, and binds to integrin alpha-V/beta-3 (ITGAV/ITGB3) with moderate affinity.</text>
</comment>
<comment type="subunit">
    <text evidence="2">Monomer in solution; Homodimer and oligomer in the presence of negatively charged lipids forming a pore with a size ranging between 20 and 30 Angstroms.</text>
</comment>
<comment type="subcellular location">
    <subcellularLocation>
        <location evidence="1">Secreted</location>
    </subcellularLocation>
    <subcellularLocation>
        <location evidence="2">Target cell membrane</location>
    </subcellularLocation>
</comment>
<comment type="tissue specificity">
    <text evidence="4">Expressed by the venom gland.</text>
</comment>
<comment type="miscellaneous">
    <text evidence="4">Is classified as a P-type cytotoxin, since a proline residue stands at position 51 (Pro-31 in standard classification).</text>
</comment>
<comment type="similarity">
    <text evidence="4">Belongs to the three-finger toxin family. Short-chain subfamily. Type IA cytotoxin sub-subfamily.</text>
</comment>
<sequence length="81" mass="9042">MKTLLLTLVVVTTVCLDLGYTLKCNKLVPLFYKTCPAGKNLCYKMYMVATPKVPVKRGCIDVCPKSSLLVKYVCCNTDRCN</sequence>